<gene>
    <name evidence="1" type="primary">pheS</name>
    <name type="ordered locus">Mlab_1370</name>
</gene>
<reference key="1">
    <citation type="journal article" date="2009" name="Stand. Genomic Sci.">
        <title>Complete genome sequence of Methanocorpusculum labreanum type strain Z.</title>
        <authorList>
            <person name="Anderson I.J."/>
            <person name="Sieprawska-Lupa M."/>
            <person name="Goltsman E."/>
            <person name="Lapidus A."/>
            <person name="Copeland A."/>
            <person name="Glavina Del Rio T."/>
            <person name="Tice H."/>
            <person name="Dalin E."/>
            <person name="Barry K."/>
            <person name="Pitluck S."/>
            <person name="Hauser L."/>
            <person name="Land M."/>
            <person name="Lucas S."/>
            <person name="Richardson P."/>
            <person name="Whitman W.B."/>
            <person name="Kyrpides N.C."/>
        </authorList>
    </citation>
    <scope>NUCLEOTIDE SEQUENCE [LARGE SCALE GENOMIC DNA]</scope>
    <source>
        <strain>ATCC 43576 / DSM 4855 / Z</strain>
    </source>
</reference>
<protein>
    <recommendedName>
        <fullName evidence="1">Phenylalanine--tRNA ligase alpha subunit</fullName>
        <ecNumber evidence="1">6.1.1.20</ecNumber>
    </recommendedName>
    <alternativeName>
        <fullName evidence="1">Phenylalanyl-tRNA synthetase alpha subunit</fullName>
        <shortName evidence="1">PheRS</shortName>
    </alternativeName>
</protein>
<dbReference type="EC" id="6.1.1.20" evidence="1"/>
<dbReference type="EMBL" id="CP000559">
    <property type="protein sequence ID" value="ABN07537.1"/>
    <property type="molecule type" value="Genomic_DNA"/>
</dbReference>
<dbReference type="RefSeq" id="WP_011833740.1">
    <property type="nucleotide sequence ID" value="NC_008942.1"/>
</dbReference>
<dbReference type="SMR" id="A2ST81"/>
<dbReference type="STRING" id="410358.Mlab_1370"/>
<dbReference type="GeneID" id="4795318"/>
<dbReference type="KEGG" id="mla:Mlab_1370"/>
<dbReference type="eggNOG" id="arCOG00410">
    <property type="taxonomic scope" value="Archaea"/>
</dbReference>
<dbReference type="HOGENOM" id="CLU_025086_2_2_2"/>
<dbReference type="OrthoDB" id="372178at2157"/>
<dbReference type="Proteomes" id="UP000000365">
    <property type="component" value="Chromosome"/>
</dbReference>
<dbReference type="GO" id="GO:0005737">
    <property type="term" value="C:cytoplasm"/>
    <property type="evidence" value="ECO:0007669"/>
    <property type="project" value="UniProtKB-SubCell"/>
</dbReference>
<dbReference type="GO" id="GO:0005524">
    <property type="term" value="F:ATP binding"/>
    <property type="evidence" value="ECO:0007669"/>
    <property type="project" value="UniProtKB-UniRule"/>
</dbReference>
<dbReference type="GO" id="GO:0000287">
    <property type="term" value="F:magnesium ion binding"/>
    <property type="evidence" value="ECO:0007669"/>
    <property type="project" value="UniProtKB-UniRule"/>
</dbReference>
<dbReference type="GO" id="GO:0004826">
    <property type="term" value="F:phenylalanine-tRNA ligase activity"/>
    <property type="evidence" value="ECO:0007669"/>
    <property type="project" value="UniProtKB-UniRule"/>
</dbReference>
<dbReference type="GO" id="GO:0000049">
    <property type="term" value="F:tRNA binding"/>
    <property type="evidence" value="ECO:0007669"/>
    <property type="project" value="InterPro"/>
</dbReference>
<dbReference type="GO" id="GO:0006432">
    <property type="term" value="P:phenylalanyl-tRNA aminoacylation"/>
    <property type="evidence" value="ECO:0007669"/>
    <property type="project" value="UniProtKB-UniRule"/>
</dbReference>
<dbReference type="CDD" id="cd00496">
    <property type="entry name" value="PheRS_alpha_core"/>
    <property type="match status" value="1"/>
</dbReference>
<dbReference type="FunFam" id="3.30.930.10:FF:000095">
    <property type="entry name" value="Phenylalanine--tRNA ligase alpha subunit"/>
    <property type="match status" value="1"/>
</dbReference>
<dbReference type="Gene3D" id="1.10.10.2320">
    <property type="match status" value="1"/>
</dbReference>
<dbReference type="Gene3D" id="1.10.10.2330">
    <property type="match status" value="1"/>
</dbReference>
<dbReference type="Gene3D" id="3.30.1370.240">
    <property type="match status" value="1"/>
</dbReference>
<dbReference type="Gene3D" id="3.30.930.10">
    <property type="entry name" value="Bira Bifunctional Protein, Domain 2"/>
    <property type="match status" value="1"/>
</dbReference>
<dbReference type="HAMAP" id="MF_00282">
    <property type="entry name" value="Phe_tRNA_synth_alpha2"/>
    <property type="match status" value="1"/>
</dbReference>
<dbReference type="InterPro" id="IPR006195">
    <property type="entry name" value="aa-tRNA-synth_II"/>
</dbReference>
<dbReference type="InterPro" id="IPR045864">
    <property type="entry name" value="aa-tRNA-synth_II/BPL/LPL"/>
</dbReference>
<dbReference type="InterPro" id="IPR004529">
    <property type="entry name" value="Phe-tRNA-synth_IIc_asu"/>
</dbReference>
<dbReference type="InterPro" id="IPR022917">
    <property type="entry name" value="Phe_tRNA_ligase_alpha_bac/arc"/>
</dbReference>
<dbReference type="InterPro" id="IPR002319">
    <property type="entry name" value="Phenylalanyl-tRNA_Synthase"/>
</dbReference>
<dbReference type="NCBIfam" id="TIGR00468">
    <property type="entry name" value="pheS"/>
    <property type="match status" value="1"/>
</dbReference>
<dbReference type="NCBIfam" id="NF003210">
    <property type="entry name" value="PRK04172.1"/>
    <property type="match status" value="1"/>
</dbReference>
<dbReference type="PANTHER" id="PTHR11538:SF40">
    <property type="entry name" value="PHENYLALANINE--TRNA LIGASE ALPHA SUBUNIT"/>
    <property type="match status" value="1"/>
</dbReference>
<dbReference type="PANTHER" id="PTHR11538">
    <property type="entry name" value="PHENYLALANYL-TRNA SYNTHETASE"/>
    <property type="match status" value="1"/>
</dbReference>
<dbReference type="Pfam" id="PF01409">
    <property type="entry name" value="tRNA-synt_2d"/>
    <property type="match status" value="1"/>
</dbReference>
<dbReference type="SUPFAM" id="SSF55681">
    <property type="entry name" value="Class II aaRS and biotin synthetases"/>
    <property type="match status" value="1"/>
</dbReference>
<dbReference type="PROSITE" id="PS50862">
    <property type="entry name" value="AA_TRNA_LIGASE_II"/>
    <property type="match status" value="1"/>
</dbReference>
<organism>
    <name type="scientific">Methanocorpusculum labreanum (strain ATCC 43576 / DSM 4855 / Z)</name>
    <dbReference type="NCBI Taxonomy" id="410358"/>
    <lineage>
        <taxon>Archaea</taxon>
        <taxon>Methanobacteriati</taxon>
        <taxon>Methanobacteriota</taxon>
        <taxon>Stenosarchaea group</taxon>
        <taxon>Methanomicrobia</taxon>
        <taxon>Methanomicrobiales</taxon>
        <taxon>Methanocorpusculaceae</taxon>
        <taxon>Methanocorpusculum</taxon>
    </lineage>
</organism>
<comment type="catalytic activity">
    <reaction evidence="1">
        <text>tRNA(Phe) + L-phenylalanine + ATP = L-phenylalanyl-tRNA(Phe) + AMP + diphosphate + H(+)</text>
        <dbReference type="Rhea" id="RHEA:19413"/>
        <dbReference type="Rhea" id="RHEA-COMP:9668"/>
        <dbReference type="Rhea" id="RHEA-COMP:9699"/>
        <dbReference type="ChEBI" id="CHEBI:15378"/>
        <dbReference type="ChEBI" id="CHEBI:30616"/>
        <dbReference type="ChEBI" id="CHEBI:33019"/>
        <dbReference type="ChEBI" id="CHEBI:58095"/>
        <dbReference type="ChEBI" id="CHEBI:78442"/>
        <dbReference type="ChEBI" id="CHEBI:78531"/>
        <dbReference type="ChEBI" id="CHEBI:456215"/>
        <dbReference type="EC" id="6.1.1.20"/>
    </reaction>
</comment>
<comment type="cofactor">
    <cofactor evidence="1">
        <name>Mg(2+)</name>
        <dbReference type="ChEBI" id="CHEBI:18420"/>
    </cofactor>
    <text evidence="1">Binds 2 magnesium ions per tetramer.</text>
</comment>
<comment type="subunit">
    <text evidence="1">Tetramer of two alpha and two beta subunits.</text>
</comment>
<comment type="subcellular location">
    <subcellularLocation>
        <location evidence="1">Cytoplasm</location>
    </subcellularLocation>
</comment>
<comment type="similarity">
    <text evidence="1">Belongs to the class-II aminoacyl-tRNA synthetase family. Phe-tRNA synthetase alpha subunit type 2 subfamily.</text>
</comment>
<accession>A2ST81</accession>
<feature type="chain" id="PRO_1000007661" description="Phenylalanine--tRNA ligase alpha subunit">
    <location>
        <begin position="1"/>
        <end position="474"/>
    </location>
</feature>
<feature type="binding site" evidence="1">
    <location>
        <position position="317"/>
    </location>
    <ligand>
        <name>L-phenylalanine</name>
        <dbReference type="ChEBI" id="CHEBI:58095"/>
    </ligand>
</feature>
<feature type="binding site" evidence="1">
    <location>
        <begin position="356"/>
        <end position="358"/>
    </location>
    <ligand>
        <name>L-phenylalanine</name>
        <dbReference type="ChEBI" id="CHEBI:58095"/>
    </ligand>
</feature>
<feature type="binding site" evidence="1">
    <location>
        <position position="396"/>
    </location>
    <ligand>
        <name>L-phenylalanine</name>
        <dbReference type="ChEBI" id="CHEBI:58095"/>
    </ligand>
</feature>
<feature type="binding site" evidence="1">
    <location>
        <position position="398"/>
    </location>
    <ligand>
        <name>Mg(2+)</name>
        <dbReference type="ChEBI" id="CHEBI:18420"/>
        <note>shared with beta subunit</note>
    </ligand>
</feature>
<feature type="binding site" evidence="1">
    <location>
        <position position="421"/>
    </location>
    <ligand>
        <name>L-phenylalanine</name>
        <dbReference type="ChEBI" id="CHEBI:58095"/>
    </ligand>
</feature>
<proteinExistence type="inferred from homology"/>
<keyword id="KW-0030">Aminoacyl-tRNA synthetase</keyword>
<keyword id="KW-0067">ATP-binding</keyword>
<keyword id="KW-0963">Cytoplasm</keyword>
<keyword id="KW-0436">Ligase</keyword>
<keyword id="KW-0460">Magnesium</keyword>
<keyword id="KW-0479">Metal-binding</keyword>
<keyword id="KW-0547">Nucleotide-binding</keyword>
<keyword id="KW-0648">Protein biosynthesis</keyword>
<keyword id="KW-1185">Reference proteome</keyword>
<sequence>MDLTINEKRVLAALIGSGPKAAEILAEKMDAALESVIQWAHLCADKGLVTLEKTVTEQAKLTEEGEKYAKEGLPERQILNSIDGSIPMSELTKNPLSKIAIGWLRKKNWVTIKDGIVFVNENTAVGEDELALKNPVPGTPACKELAKRGLVEVVEKTSWKIALTTDGEKIAKDGLDLREEVATLTREQILSGEWKSLPLRKYSIDKLPKKIYGGRVHPNQQILDEIRDLLFEMGFTEFHGSIVQNSFWNFDSLYQPQDHPAREMQDTFHLAEELPLPNGWEKIRDIHKFGGDTGSTGWGGEWSPEVGKKCVLRTHSTSLSIQYLAEHPNPPLKAFSISRVYRRETIDPTHLPEFEQLEGIVMDKDLHFGHLLGFFKEFFGRMGFEEVRFRPGYFPYTEPSVEPEVWVDGLGWVELGGAGIFRKEVTAPWGIDCPVLAWGLGVSRVSMLRMGLKDLRQLYKSDIDWIRASPVRRS</sequence>
<name>SYFA_METLZ</name>
<evidence type="ECO:0000255" key="1">
    <source>
        <dbReference type="HAMAP-Rule" id="MF_00282"/>
    </source>
</evidence>